<organism>
    <name type="scientific">Streptococcus gordonii (strain Challis / ATCC 35105 / BCRC 15272 / CH1 / DL1 / V288)</name>
    <dbReference type="NCBI Taxonomy" id="467705"/>
    <lineage>
        <taxon>Bacteria</taxon>
        <taxon>Bacillati</taxon>
        <taxon>Bacillota</taxon>
        <taxon>Bacilli</taxon>
        <taxon>Lactobacillales</taxon>
        <taxon>Streptococcaceae</taxon>
        <taxon>Streptococcus</taxon>
    </lineage>
</organism>
<accession>A8AVF8</accession>
<proteinExistence type="inferred from homology"/>
<keyword id="KW-0067">ATP-binding</keyword>
<keyword id="KW-0963">Cytoplasm</keyword>
<keyword id="KW-0436">Ligase</keyword>
<keyword id="KW-0547">Nucleotide-binding</keyword>
<keyword id="KW-1185">Reference proteome</keyword>
<keyword id="KW-0694">RNA-binding</keyword>
<keyword id="KW-0819">tRNA processing</keyword>
<keyword id="KW-0820">tRNA-binding</keyword>
<comment type="function">
    <text evidence="1">Catalyzes the formation of N(4)-acetylcytidine (ac(4)C) at the wobble position of elongator tRNA(Met), using acetate and ATP as substrates. First activates an acetate ion to form acetyladenylate (Ac-AMP) and then transfers the acetyl group to tRNA to form ac(4)C34.</text>
</comment>
<comment type="catalytic activity">
    <reaction evidence="1">
        <text>cytidine(34) in elongator tRNA(Met) + acetate + ATP = N(4)-acetylcytidine(34) in elongator tRNA(Met) + AMP + diphosphate</text>
        <dbReference type="Rhea" id="RHEA:58144"/>
        <dbReference type="Rhea" id="RHEA-COMP:10693"/>
        <dbReference type="Rhea" id="RHEA-COMP:10694"/>
        <dbReference type="ChEBI" id="CHEBI:30089"/>
        <dbReference type="ChEBI" id="CHEBI:30616"/>
        <dbReference type="ChEBI" id="CHEBI:33019"/>
        <dbReference type="ChEBI" id="CHEBI:74900"/>
        <dbReference type="ChEBI" id="CHEBI:82748"/>
        <dbReference type="ChEBI" id="CHEBI:456215"/>
    </reaction>
</comment>
<comment type="subcellular location">
    <subcellularLocation>
        <location evidence="1">Cytoplasm</location>
    </subcellularLocation>
</comment>
<comment type="similarity">
    <text evidence="1">Belongs to the TmcAL family.</text>
</comment>
<dbReference type="EC" id="6.3.4.-" evidence="1"/>
<dbReference type="EMBL" id="CP000725">
    <property type="protein sequence ID" value="ABV10943.1"/>
    <property type="molecule type" value="Genomic_DNA"/>
</dbReference>
<dbReference type="RefSeq" id="WP_011999959.1">
    <property type="nucleotide sequence ID" value="NC_009785.1"/>
</dbReference>
<dbReference type="SMR" id="A8AVF8"/>
<dbReference type="STRING" id="467705.SGO_0452"/>
<dbReference type="KEGG" id="sgo:SGO_0452"/>
<dbReference type="eggNOG" id="COG1323">
    <property type="taxonomic scope" value="Bacteria"/>
</dbReference>
<dbReference type="HOGENOM" id="CLU_038915_0_2_9"/>
<dbReference type="Proteomes" id="UP000001131">
    <property type="component" value="Chromosome"/>
</dbReference>
<dbReference type="GO" id="GO:0005737">
    <property type="term" value="C:cytoplasm"/>
    <property type="evidence" value="ECO:0007669"/>
    <property type="project" value="UniProtKB-SubCell"/>
</dbReference>
<dbReference type="GO" id="GO:0005524">
    <property type="term" value="F:ATP binding"/>
    <property type="evidence" value="ECO:0007669"/>
    <property type="project" value="UniProtKB-KW"/>
</dbReference>
<dbReference type="GO" id="GO:0016879">
    <property type="term" value="F:ligase activity, forming carbon-nitrogen bonds"/>
    <property type="evidence" value="ECO:0007669"/>
    <property type="project" value="UniProtKB-UniRule"/>
</dbReference>
<dbReference type="GO" id="GO:0000049">
    <property type="term" value="F:tRNA binding"/>
    <property type="evidence" value="ECO:0007669"/>
    <property type="project" value="UniProtKB-KW"/>
</dbReference>
<dbReference type="GO" id="GO:0006400">
    <property type="term" value="P:tRNA modification"/>
    <property type="evidence" value="ECO:0007669"/>
    <property type="project" value="UniProtKB-UniRule"/>
</dbReference>
<dbReference type="Gene3D" id="3.40.50.620">
    <property type="entry name" value="HUPs"/>
    <property type="match status" value="1"/>
</dbReference>
<dbReference type="HAMAP" id="MF_01539">
    <property type="entry name" value="TmcAL"/>
    <property type="match status" value="1"/>
</dbReference>
<dbReference type="InterPro" id="IPR014729">
    <property type="entry name" value="Rossmann-like_a/b/a_fold"/>
</dbReference>
<dbReference type="InterPro" id="IPR008513">
    <property type="entry name" value="tRNA(Met)_cyd_acetate_ligase"/>
</dbReference>
<dbReference type="NCBIfam" id="NF010191">
    <property type="entry name" value="PRK13670.1"/>
    <property type="match status" value="1"/>
</dbReference>
<dbReference type="PANTHER" id="PTHR37825">
    <property type="entry name" value="TRNA(MET) CYTIDINE ACETATE LIGASE"/>
    <property type="match status" value="1"/>
</dbReference>
<dbReference type="PANTHER" id="PTHR37825:SF1">
    <property type="entry name" value="TRNA(MET) CYTIDINE ACETATE LIGASE"/>
    <property type="match status" value="1"/>
</dbReference>
<dbReference type="Pfam" id="PF05636">
    <property type="entry name" value="HIGH_NTase1"/>
    <property type="match status" value="1"/>
</dbReference>
<dbReference type="SUPFAM" id="SSF52374">
    <property type="entry name" value="Nucleotidylyl transferase"/>
    <property type="match status" value="1"/>
</dbReference>
<feature type="chain" id="PRO_1000087625" description="tRNA(Met) cytidine acetate ligase">
    <location>
        <begin position="1"/>
        <end position="363"/>
    </location>
</feature>
<feature type="binding site" evidence="1">
    <location>
        <begin position="7"/>
        <end position="20"/>
    </location>
    <ligand>
        <name>ATP</name>
        <dbReference type="ChEBI" id="CHEBI:30616"/>
    </ligand>
</feature>
<feature type="binding site" evidence="1">
    <location>
        <position position="96"/>
    </location>
    <ligand>
        <name>ATP</name>
        <dbReference type="ChEBI" id="CHEBI:30616"/>
    </ligand>
</feature>
<feature type="binding site" evidence="1">
    <location>
        <position position="152"/>
    </location>
    <ligand>
        <name>ATP</name>
        <dbReference type="ChEBI" id="CHEBI:30616"/>
    </ligand>
</feature>
<feature type="binding site" evidence="1">
    <location>
        <position position="175"/>
    </location>
    <ligand>
        <name>ATP</name>
        <dbReference type="ChEBI" id="CHEBI:30616"/>
    </ligand>
</feature>
<reference key="1">
    <citation type="journal article" date="2007" name="J. Bacteriol.">
        <title>Genome-wide transcriptional changes in Streptococcus gordonii in response to competence signaling peptide.</title>
        <authorList>
            <person name="Vickerman M.M."/>
            <person name="Iobst S."/>
            <person name="Jesionowski A.M."/>
            <person name="Gill S.R."/>
        </authorList>
    </citation>
    <scope>NUCLEOTIDE SEQUENCE [LARGE SCALE GENOMIC DNA]</scope>
    <source>
        <strain>Challis / ATCC 35105 / BCRC 15272 / CH1 / DL1 / V288</strain>
    </source>
</reference>
<evidence type="ECO:0000255" key="1">
    <source>
        <dbReference type="HAMAP-Rule" id="MF_01539"/>
    </source>
</evidence>
<name>TMCAL_STRGC</name>
<protein>
    <recommendedName>
        <fullName evidence="1">tRNA(Met) cytidine acetate ligase</fullName>
        <ecNumber evidence="1">6.3.4.-</ecNumber>
    </recommendedName>
</protein>
<gene>
    <name evidence="1" type="primary">tmcAL</name>
    <name type="ordered locus">SGO_0452</name>
</gene>
<sequence length="363" mass="40640">MTVTGIIAEFNPFHNGHKYLLEQASGLKIIAMSGNFVQRGEPAIVDKWTRAQMALEAGADLVLELPFLVSVQAADFFAKGAVDILERLDIEQLTFGTEEVLDYESISKVYGQKAEQMEAYLAGLPDSLSYPQKTQAMWQEFAGLNFSGSTPNHILGLAYSKAVAVKNIKLCPIQRQGAGYHSLSANQEFASATALRQNLDQPDFLKKFTPVHHLLETAPKVTWSDLFPYLRYQIVTCPDLTSFYQVNQELAVRIREALKSSETIEELVEQVATKRYTKARIRRLLTYILVGARQEEVPSGIHILGFSEQGRQHLSQLKGKVELVSRIGKKPWDSLTQQADKVYQLGNPALKEQNFGRVPVILL</sequence>